<comment type="function">
    <text>Core component of nucleosome. Nucleosomes wrap and compact DNA into chromatin, limiting DNA accessibility to the cellular machineries which require DNA as a template. Histones thereby play a central role in transcription regulation, DNA repair, DNA replication and chromosomal stability. DNA accessibility is regulated via a complex set of post-translational modifications of histones, also called histone code, and nucleosome remodeling.</text>
</comment>
<comment type="subunit">
    <text evidence="2 9 17 23">The nucleosome is a histone octamer containing two molecules each of H2A, H2B, H3 and H4 assembled in one H3-H4 heterotetramer and two H2A-H2B heterodimers. The octamer wraps approximately 147 bp of DNA. The H3K9meK27me dimethylated N-terminal tail of histone H3 can directly interact with the chromodomains of CMT3 and/or LHP1 (PubMed:11898023, PubMed:15457214). Interacts with ORTH2 (PubMed:17242155). Interacts (in absence of H3K27me) with TSK (PubMed:35298257).</text>
</comment>
<comment type="subcellular location">
    <subcellularLocation>
        <location evidence="19 22">Nucleus</location>
    </subcellularLocation>
    <subcellularLocation>
        <location evidence="19 22">Chromosome</location>
    </subcellularLocation>
    <text evidence="22">Localized at chromocenters.</text>
</comment>
<comment type="tissue specificity">
    <text evidence="13">Expressed in inflorescences, buds and seedlings.</text>
</comment>
<comment type="developmental stage">
    <text evidence="7">Expressed during the S phase.</text>
</comment>
<comment type="PTM">
    <text evidence="4 10 15 16 18">Can be acetylated to form H3K9ac, H3K14ac, H3K18ac and H3K23ac. H3K9ac could compete with H3K9me and prevent gene silencing. H3K9acK14ac molecules are 30-fold less abundant than H3K9ac or H3K14ac. Very low level of H3K9meK14ac. H3K14 is specifically acetylated by HAG1 and deacetylated by HDA6. H3K9ac is deacetylated by HDT1. H3K9ac is restricted to euchromatin. H3K18ac, but not H3K9ac, is cell-cycle dependent and linked to replication. Reduced H4R3me2s increases H3K14ac in the FLC chromatin and activates or maintains its transcription. Vernalization decreases H3K9/14ac in the promoter region of FLC.</text>
</comment>
<comment type="PTM">
    <text evidence="3 4 6 8 10 12 14 16 19 20 21 23">Mono-, di- or trimethylated to form mainly H3K4me1/2/3, H3K9me1/2/3, H3K27me1/2/3 and H3K36me1/2/3. Very low monomethylation at H3K18me1 or H3K23me1. H3K4me1/2/3, H3K9me3, H3K27me3 and H3K36me1/2/3 are typical marks for euchromatin, whereas heterochromatic chromocenters are enriched in H3K9me1/2 and H3K27me1/2. H3K27me3 is largely restricted to the transcribed regions of single genes and not associated with low-nucleosome density regions. SUVR1 to SUVR5, ASHH1 to ASHH3, ASHR1 to ASHR3, and ATXR5 and ATXR6 methylate H3, with ASHH2 methylating specifically H3K4 and H3K36 and ATXR5 and ATXR6 monomethylating specifically H3K27me1 (PubMed:35298257). The Su(var)3-9 homolog proteins (SUVH1 to SUVH10) are H3K9-specific methyltransferases. Among them, KRYPTONITE (SUVH4) is only involved in di- or trimethylation. Regarding H3K9, the major forms are H3K9me1 (20%) and H3K9me2 (10%), while H3K9me3 is rare (0.2%). H3K9me is controlled by DNA methylation and is not required for the formation of constitutive heterochromatin, but double methylation H3K9meK27me is required for the recruitment of CMT3 to methylate heterochromatin and silence euchromatic loci. Very low level of H3K9meK14ac. 60% of H3K27 is found under the form of H3K27me1, 16% of H3K27me2 and 5% of H3K27me3. When associated with H3K27me, H3K36 can only be mono- or di-methylated. H327me2K36me1 or H3K27me1K36me2 are both found in 3% of the proteins. When not associated with H3K27me, H3K36 is only trimethylated. H3K36me3 is found in 3% of the proteins. H2BK143ub1 is probably prerequisite for H3K4me. Elevated H3K4me3 and H3K36me2 formed by ASHH2 are required for high FLC expression. Vernalization increases H3K9me2 and H3K27me2/3 and decreases H3K4me2 at the FLC locus, resulting in the epigenetic silencing of this floral repressor.</text>
</comment>
<comment type="PTM">
    <text evidence="5 11">In meta- and anaphase, H3T11ph is found on the entire length of the condensed chromosomes, whereas H3S10ph and H3S28ph are confined to the pericentromeric regions. During the first meiotic division, H3S10ph and H3S28ph are found on the entire length of the chromosome. Both sites may be involved in sister chromatid cohesion. No phosphorylation detected during interphase. AUR1 and AUR2 phosphorylate only H3S10, while AUR3 phosphorylates both H3S10 and H3S28.</text>
</comment>
<comment type="similarity">
    <text evidence="24">Belongs to the histone H3 family.</text>
</comment>
<comment type="caution">
    <text evidence="24">To ensure consistency between histone entries, we follow the 'Brno' nomenclature for histone modifications, with positions referring to those used in the literature for the 'closest' model organism. Due to slight variations in histone sequences between organisms and to the presence of initiator methionine in UniProtKB/Swiss-Prot sequences, the actual positions of modified amino acids in the sequence generally differ. In this entry the following conventions are used: H3K4me1/2/3 = mono-, di- and trimethylated Lys-5; H3K9me1/2/3 = mono-, di- and trimethylated Lys-10; H3K9ac = acetylated Lys-10; H3S10ph = phosphorylated Ser-11; H3T11ph = phosphorylated Thr-12; H3K14ac = acetylated Lys-15; H3K18ac = acetylated Lys-19; H3K18me1 = monomethylated Lys-19; H3K23ac = acetylated Lys-24; H3K23me1 = monomethylated Lys-24; H3K27me1/2/3 = mono-, di- and trimethylated Lys-28; H3S28ph = phosphorylated Ser-29; H3K36me1/2/3 = mono-, di- and trimethylated Lys-37.</text>
</comment>
<dbReference type="EMBL" id="M35387">
    <property type="protein sequence ID" value="AAA79889.1"/>
    <property type="molecule type" value="Genomic_DNA"/>
</dbReference>
<dbReference type="EMBL" id="M17131">
    <property type="protein sequence ID" value="AAA32809.1"/>
    <property type="molecule type" value="Genomic_DNA"/>
</dbReference>
<dbReference type="EMBL" id="M17130">
    <property type="protein sequence ID" value="AAA32808.1"/>
    <property type="molecule type" value="Genomic_DNA"/>
</dbReference>
<dbReference type="EMBL" id="AC003114">
    <property type="protein sequence ID" value="AAC24084.1"/>
    <property type="molecule type" value="Genomic_DNA"/>
</dbReference>
<dbReference type="EMBL" id="AB024028">
    <property type="protein sequence ID" value="BAA95712.1"/>
    <property type="molecule type" value="Genomic_DNA"/>
</dbReference>
<dbReference type="EMBL" id="AL353995">
    <property type="protein sequence ID" value="CAB89403.1"/>
    <property type="molecule type" value="Genomic_DNA"/>
</dbReference>
<dbReference type="EMBL" id="AL353995">
    <property type="protein sequence ID" value="CAB89404.1"/>
    <property type="molecule type" value="Genomic_DNA"/>
</dbReference>
<dbReference type="EMBL" id="AB011479">
    <property type="protein sequence ID" value="BAB11558.1"/>
    <property type="molecule type" value="Genomic_DNA"/>
</dbReference>
<dbReference type="EMBL" id="CP002684">
    <property type="protein sequence ID" value="AEE28413.1"/>
    <property type="molecule type" value="Genomic_DNA"/>
</dbReference>
<dbReference type="EMBL" id="CP002686">
    <property type="protein sequence ID" value="AEE77308.1"/>
    <property type="molecule type" value="Genomic_DNA"/>
</dbReference>
<dbReference type="EMBL" id="CP002688">
    <property type="protein sequence ID" value="AED91535.1"/>
    <property type="molecule type" value="Genomic_DNA"/>
</dbReference>
<dbReference type="EMBL" id="CP002688">
    <property type="protein sequence ID" value="AED91536.1"/>
    <property type="molecule type" value="Genomic_DNA"/>
</dbReference>
<dbReference type="EMBL" id="CP002688">
    <property type="protein sequence ID" value="AED98043.1"/>
    <property type="molecule type" value="Genomic_DNA"/>
</dbReference>
<dbReference type="EMBL" id="AK117157">
    <property type="protein sequence ID" value="BAC41835.1"/>
    <property type="molecule type" value="mRNA"/>
</dbReference>
<dbReference type="EMBL" id="AF370577">
    <property type="protein sequence ID" value="AAK49583.1"/>
    <property type="molecule type" value="mRNA"/>
</dbReference>
<dbReference type="EMBL" id="AY037250">
    <property type="protein sequence ID" value="AAK59851.1"/>
    <property type="molecule type" value="mRNA"/>
</dbReference>
<dbReference type="EMBL" id="AY039904">
    <property type="protein sequence ID" value="AAK64008.1"/>
    <property type="molecule type" value="mRNA"/>
</dbReference>
<dbReference type="EMBL" id="AY077654">
    <property type="protein sequence ID" value="AAL76132.1"/>
    <property type="molecule type" value="mRNA"/>
</dbReference>
<dbReference type="EMBL" id="AY081741">
    <property type="protein sequence ID" value="AAL87394.1"/>
    <property type="molecule type" value="mRNA"/>
</dbReference>
<dbReference type="EMBL" id="BT003051">
    <property type="protein sequence ID" value="AAO23616.1"/>
    <property type="molecule type" value="mRNA"/>
</dbReference>
<dbReference type="EMBL" id="BT003162">
    <property type="protein sequence ID" value="AAO24594.1"/>
    <property type="molecule type" value="mRNA"/>
</dbReference>
<dbReference type="EMBL" id="BT005805">
    <property type="protein sequence ID" value="AAO64207.1"/>
    <property type="molecule type" value="mRNA"/>
</dbReference>
<dbReference type="EMBL" id="BT006068">
    <property type="protein sequence ID" value="AAP04053.1"/>
    <property type="molecule type" value="mRNA"/>
</dbReference>
<dbReference type="EMBL" id="AY084316">
    <property type="protein sequence ID" value="AAM60903.1"/>
    <property type="molecule type" value="mRNA"/>
</dbReference>
<dbReference type="PIR" id="S06250">
    <property type="entry name" value="S06250"/>
</dbReference>
<dbReference type="RefSeq" id="NP_189372.1">
    <property type="nucleotide sequence ID" value="NM_113651.2"/>
</dbReference>
<dbReference type="RefSeq" id="NP_201339.1">
    <property type="nucleotide sequence ID" value="NM_125934.2"/>
</dbReference>
<dbReference type="RefSeq" id="NP_563838.1">
    <property type="nucleotide sequence ID" value="NM_100790.3"/>
</dbReference>
<dbReference type="RefSeq" id="NP_568227.1">
    <property type="nucleotide sequence ID" value="NM_121077.3"/>
</dbReference>
<dbReference type="RefSeq" id="NP_568228.1">
    <property type="nucleotide sequence ID" value="NM_121078.3"/>
</dbReference>
<dbReference type="PDB" id="4FT2">
    <property type="method" value="X-ray"/>
    <property type="resolution" value="3.20 A"/>
    <property type="chains" value="P=2-16"/>
</dbReference>
<dbReference type="PDB" id="4FT4">
    <property type="method" value="X-ray"/>
    <property type="resolution" value="2.70 A"/>
    <property type="chains" value="P/Q=2-33"/>
</dbReference>
<dbReference type="PDB" id="4IUR">
    <property type="method" value="X-ray"/>
    <property type="resolution" value="2.50 A"/>
    <property type="chains" value="C=2-16"/>
</dbReference>
<dbReference type="PDB" id="4IUT">
    <property type="method" value="X-ray"/>
    <property type="resolution" value="2.70 A"/>
    <property type="chains" value="C=2-16"/>
</dbReference>
<dbReference type="PDB" id="4IUU">
    <property type="method" value="X-ray"/>
    <property type="resolution" value="2.70 A"/>
    <property type="chains" value="C=2-16"/>
</dbReference>
<dbReference type="PDB" id="4IUV">
    <property type="method" value="X-ray"/>
    <property type="resolution" value="2.80 A"/>
    <property type="chains" value="C=2-16"/>
</dbReference>
<dbReference type="PDB" id="5HH7">
    <property type="method" value="X-ray"/>
    <property type="resolution" value="1.90 A"/>
    <property type="chains" value="P=2-16"/>
</dbReference>
<dbReference type="PDB" id="5VAH">
    <property type="method" value="X-ray"/>
    <property type="resolution" value="2.40 A"/>
    <property type="chains" value="C/D=22-36"/>
</dbReference>
<dbReference type="PDB" id="5VBC">
    <property type="method" value="X-ray"/>
    <property type="resolution" value="2.10 A"/>
    <property type="chains" value="C/D=24-37"/>
</dbReference>
<dbReference type="PDB" id="5YC3">
    <property type="method" value="X-ray"/>
    <property type="resolution" value="2.60 A"/>
    <property type="chains" value="P=2-10"/>
</dbReference>
<dbReference type="PDB" id="5YC4">
    <property type="method" value="X-ray"/>
    <property type="resolution" value="2.70 A"/>
    <property type="chains" value="P=2-10"/>
</dbReference>
<dbReference type="PDB" id="5YKO">
    <property type="method" value="X-ray"/>
    <property type="resolution" value="2.90 A"/>
    <property type="chains" value="P=2-11"/>
</dbReference>
<dbReference type="PDB" id="5YVX">
    <property type="method" value="X-ray"/>
    <property type="resolution" value="1.59 A"/>
    <property type="chains" value="C=2-10"/>
</dbReference>
<dbReference type="PDB" id="5Z8L">
    <property type="method" value="X-ray"/>
    <property type="resolution" value="2.00 A"/>
    <property type="chains" value="P=21-36"/>
</dbReference>
<dbReference type="PDB" id="5Z8N">
    <property type="method" value="X-ray"/>
    <property type="resolution" value="3.10 A"/>
    <property type="chains" value="P/Q/R=2-16"/>
</dbReference>
<dbReference type="PDB" id="5ZNP">
    <property type="method" value="X-ray"/>
    <property type="resolution" value="2.80 A"/>
    <property type="chains" value="P/Q=2-16"/>
</dbReference>
<dbReference type="PDB" id="5ZNR">
    <property type="method" value="X-ray"/>
    <property type="resolution" value="3.20 A"/>
    <property type="chains" value="P/Q=21-37"/>
</dbReference>
<dbReference type="PDB" id="5ZWX">
    <property type="method" value="X-ray"/>
    <property type="resolution" value="1.90 A"/>
    <property type="chains" value="P/Q=2-16"/>
</dbReference>
<dbReference type="PDB" id="6IP4">
    <property type="method" value="X-ray"/>
    <property type="resolution" value="2.60 A"/>
    <property type="chains" value="B=25-36"/>
</dbReference>
<dbReference type="PDB" id="6LQE">
    <property type="method" value="X-ray"/>
    <property type="resolution" value="1.90 A"/>
    <property type="chains" value="P=2-16"/>
</dbReference>
<dbReference type="PDB" id="6LQF">
    <property type="method" value="X-ray"/>
    <property type="resolution" value="1.50 A"/>
    <property type="chains" value="P=2-16"/>
</dbReference>
<dbReference type="PDB" id="7CCE">
    <property type="method" value="X-ray"/>
    <property type="resolution" value="2.40 A"/>
    <property type="chains" value="P=21-38"/>
</dbReference>
<dbReference type="PDB" id="7DE9">
    <property type="method" value="X-ray"/>
    <property type="resolution" value="1.71 A"/>
    <property type="chains" value="P=2-16"/>
</dbReference>
<dbReference type="PDB" id="7T7T">
    <property type="method" value="X-ray"/>
    <property type="resolution" value="3.17 A"/>
    <property type="chains" value="W/X=2-46"/>
</dbReference>
<dbReference type="PDB" id="7YTA">
    <property type="method" value="X-ray"/>
    <property type="resolution" value="2.31 A"/>
    <property type="chains" value="P/Q/R=2-16"/>
</dbReference>
<dbReference type="PDB" id="8J90">
    <property type="method" value="EM"/>
    <property type="resolution" value="4.71 A"/>
    <property type="chains" value="A/E=1-136"/>
</dbReference>
<dbReference type="PDB" id="8J91">
    <property type="method" value="EM"/>
    <property type="resolution" value="2.90 A"/>
    <property type="chains" value="A/E=1-136"/>
</dbReference>
<dbReference type="PDB" id="8J92">
    <property type="method" value="EM"/>
    <property type="resolution" value="2.90 A"/>
    <property type="chains" value="A/E=1-136"/>
</dbReference>
<dbReference type="PDB" id="8JG4">
    <property type="method" value="X-ray"/>
    <property type="resolution" value="2.30 A"/>
    <property type="chains" value="C/D=25-32"/>
</dbReference>
<dbReference type="PDB" id="8KCB">
    <property type="method" value="EM"/>
    <property type="resolution" value="3.17 A"/>
    <property type="chains" value="E/F=1-136"/>
</dbReference>
<dbReference type="PDB" id="8KCC">
    <property type="method" value="EM"/>
    <property type="resolution" value="3.10 A"/>
    <property type="chains" value="E/F=1-136"/>
</dbReference>
<dbReference type="PDB" id="8WH5">
    <property type="method" value="EM"/>
    <property type="resolution" value="3.58 A"/>
    <property type="chains" value="A/E=1-136"/>
</dbReference>
<dbReference type="PDB" id="8WH8">
    <property type="method" value="EM"/>
    <property type="resolution" value="3.60 A"/>
    <property type="chains" value="A/E=1-136"/>
</dbReference>
<dbReference type="PDB" id="8WH9">
    <property type="method" value="EM"/>
    <property type="resolution" value="3.31 A"/>
    <property type="chains" value="A/E=1-136"/>
</dbReference>
<dbReference type="PDB" id="8WHA">
    <property type="method" value="EM"/>
    <property type="resolution" value="4.05 A"/>
    <property type="chains" value="A/E=1-136"/>
</dbReference>
<dbReference type="PDB" id="8WHB">
    <property type="method" value="EM"/>
    <property type="resolution" value="3.17 A"/>
    <property type="chains" value="A/E=1-136"/>
</dbReference>
<dbReference type="PDBsum" id="4FT2"/>
<dbReference type="PDBsum" id="4FT4"/>
<dbReference type="PDBsum" id="4IUR"/>
<dbReference type="PDBsum" id="4IUT"/>
<dbReference type="PDBsum" id="4IUU"/>
<dbReference type="PDBsum" id="4IUV"/>
<dbReference type="PDBsum" id="5HH7"/>
<dbReference type="PDBsum" id="5VAH"/>
<dbReference type="PDBsum" id="5VBC"/>
<dbReference type="PDBsum" id="5YC3"/>
<dbReference type="PDBsum" id="5YC4"/>
<dbReference type="PDBsum" id="5YKO"/>
<dbReference type="PDBsum" id="5YVX"/>
<dbReference type="PDBsum" id="5Z8L"/>
<dbReference type="PDBsum" id="5Z8N"/>
<dbReference type="PDBsum" id="5ZNP"/>
<dbReference type="PDBsum" id="5ZNR"/>
<dbReference type="PDBsum" id="5ZWX"/>
<dbReference type="PDBsum" id="6IP4"/>
<dbReference type="PDBsum" id="6LQE"/>
<dbReference type="PDBsum" id="6LQF"/>
<dbReference type="PDBsum" id="7CCE"/>
<dbReference type="PDBsum" id="7DE9"/>
<dbReference type="PDBsum" id="7T7T"/>
<dbReference type="PDBsum" id="7YTA"/>
<dbReference type="PDBsum" id="8J90"/>
<dbReference type="PDBsum" id="8J91"/>
<dbReference type="PDBsum" id="8J92"/>
<dbReference type="PDBsum" id="8JG4"/>
<dbReference type="PDBsum" id="8KCB"/>
<dbReference type="PDBsum" id="8KCC"/>
<dbReference type="PDBsum" id="8WH5"/>
<dbReference type="PDBsum" id="8WH8"/>
<dbReference type="PDBsum" id="8WH9"/>
<dbReference type="PDBsum" id="8WHA"/>
<dbReference type="PDBsum" id="8WHB"/>
<dbReference type="EMDB" id="EMD-36083"/>
<dbReference type="EMDB" id="EMD-36084"/>
<dbReference type="EMDB" id="EMD-36085"/>
<dbReference type="EMDB" id="EMD-37098"/>
<dbReference type="EMDB" id="EMD-37099"/>
<dbReference type="EMDB" id="EMD-37529"/>
<dbReference type="EMDB" id="EMD-37533"/>
<dbReference type="EMDB" id="EMD-37535"/>
<dbReference type="EMDB" id="EMD-37537"/>
<dbReference type="EMDB" id="EMD-37538"/>
<dbReference type="SMR" id="P59226"/>
<dbReference type="BioGRID" id="16181">
    <property type="interactions" value="8"/>
</dbReference>
<dbReference type="BioGRID" id="16182">
    <property type="interactions" value="11"/>
</dbReference>
<dbReference type="BioGRID" id="21903">
    <property type="interactions" value="16"/>
</dbReference>
<dbReference type="BioGRID" id="22681">
    <property type="interactions" value="14"/>
</dbReference>
<dbReference type="BioGRID" id="7687">
    <property type="interactions" value="8"/>
</dbReference>
<dbReference type="DIP" id="DIP-48531N"/>
<dbReference type="FunCoup" id="P59226">
    <property type="interactions" value="1952"/>
</dbReference>
<dbReference type="IntAct" id="P59226">
    <property type="interactions" value="2"/>
</dbReference>
<dbReference type="STRING" id="3702.P59226"/>
<dbReference type="iPTMnet" id="P59226"/>
<dbReference type="PaxDb" id="3702-AT1G09200.1"/>
<dbReference type="EnsemblPlants" id="AT1G09200.1">
    <property type="protein sequence ID" value="AT1G09200.1"/>
    <property type="gene ID" value="AT1G09200"/>
</dbReference>
<dbReference type="EnsemblPlants" id="AT3G27360.1">
    <property type="protein sequence ID" value="AT3G27360.1"/>
    <property type="gene ID" value="AT3G27360"/>
</dbReference>
<dbReference type="EnsemblPlants" id="AT5G10390.1">
    <property type="protein sequence ID" value="AT5G10390.1"/>
    <property type="gene ID" value="AT5G10390"/>
</dbReference>
<dbReference type="EnsemblPlants" id="AT5G10400.1">
    <property type="protein sequence ID" value="AT5G10400.1"/>
    <property type="gene ID" value="AT5G10400"/>
</dbReference>
<dbReference type="EnsemblPlants" id="AT5G65360.1">
    <property type="protein sequence ID" value="AT5G65360.1"/>
    <property type="gene ID" value="AT5G65360"/>
</dbReference>
<dbReference type="GeneID" id="822357"/>
<dbReference type="GeneID" id="830903"/>
<dbReference type="GeneID" id="830904"/>
<dbReference type="GeneID" id="836661"/>
<dbReference type="GeneID" id="837440"/>
<dbReference type="Gramene" id="AT1G09200.1">
    <property type="protein sequence ID" value="AT1G09200.1"/>
    <property type="gene ID" value="AT1G09200"/>
</dbReference>
<dbReference type="Gramene" id="AT3G27360.1">
    <property type="protein sequence ID" value="AT3G27360.1"/>
    <property type="gene ID" value="AT3G27360"/>
</dbReference>
<dbReference type="Gramene" id="AT5G10390.1">
    <property type="protein sequence ID" value="AT5G10390.1"/>
    <property type="gene ID" value="AT5G10390"/>
</dbReference>
<dbReference type="Gramene" id="AT5G10400.1">
    <property type="protein sequence ID" value="AT5G10400.1"/>
    <property type="gene ID" value="AT5G10400"/>
</dbReference>
<dbReference type="Gramene" id="AT5G65360.1">
    <property type="protein sequence ID" value="AT5G65360.1"/>
    <property type="gene ID" value="AT5G65360"/>
</dbReference>
<dbReference type="KEGG" id="ath:AT1G09200"/>
<dbReference type="KEGG" id="ath:AT3G27360"/>
<dbReference type="KEGG" id="ath:AT5G10390"/>
<dbReference type="KEGG" id="ath:AT5G10400"/>
<dbReference type="KEGG" id="ath:AT5G65360"/>
<dbReference type="Araport" id="AT1G09200"/>
<dbReference type="Araport" id="AT3G27360"/>
<dbReference type="Araport" id="AT5G10390"/>
<dbReference type="Araport" id="AT5G10400"/>
<dbReference type="Araport" id="AT5G65360"/>
<dbReference type="TAIR" id="AT1G09200">
    <property type="gene designation" value="H3.1"/>
</dbReference>
<dbReference type="TAIR" id="AT3G27360">
    <property type="gene designation" value="H3.1"/>
</dbReference>
<dbReference type="TAIR" id="AT5G10390">
    <property type="gene designation" value="HTR13"/>
</dbReference>
<dbReference type="TAIR" id="AT5G10400">
    <property type="gene designation" value="H3.1"/>
</dbReference>
<dbReference type="TAIR" id="AT5G65360">
    <property type="gene designation" value="H3.1"/>
</dbReference>
<dbReference type="eggNOG" id="KOG1745">
    <property type="taxonomic scope" value="Eukaryota"/>
</dbReference>
<dbReference type="HOGENOM" id="CLU_078295_4_0_1"/>
<dbReference type="InParanoid" id="P59226"/>
<dbReference type="OMA" id="ANDCAIH"/>
<dbReference type="OrthoDB" id="1854097at2759"/>
<dbReference type="PhylomeDB" id="P59226"/>
<dbReference type="CD-CODE" id="4299E36E">
    <property type="entry name" value="Nucleolus"/>
</dbReference>
<dbReference type="EvolutionaryTrace" id="P59226"/>
<dbReference type="PRO" id="PR:P59226"/>
<dbReference type="Proteomes" id="UP000006548">
    <property type="component" value="Chromosome 1"/>
</dbReference>
<dbReference type="Proteomes" id="UP000006548">
    <property type="component" value="Chromosome 3"/>
</dbReference>
<dbReference type="Proteomes" id="UP000006548">
    <property type="component" value="Chromosome 5"/>
</dbReference>
<dbReference type="ExpressionAtlas" id="P59226">
    <property type="expression patterns" value="baseline and differential"/>
</dbReference>
<dbReference type="GO" id="GO:0010369">
    <property type="term" value="C:chromocenter"/>
    <property type="evidence" value="ECO:0000314"/>
    <property type="project" value="UniProtKB"/>
</dbReference>
<dbReference type="GO" id="GO:0005829">
    <property type="term" value="C:cytosol"/>
    <property type="evidence" value="ECO:0007005"/>
    <property type="project" value="TAIR"/>
</dbReference>
<dbReference type="GO" id="GO:0005576">
    <property type="term" value="C:extracellular region"/>
    <property type="evidence" value="ECO:0007005"/>
    <property type="project" value="TAIR"/>
</dbReference>
<dbReference type="GO" id="GO:0000786">
    <property type="term" value="C:nucleosome"/>
    <property type="evidence" value="ECO:0007669"/>
    <property type="project" value="UniProtKB-KW"/>
</dbReference>
<dbReference type="GO" id="GO:0005634">
    <property type="term" value="C:nucleus"/>
    <property type="evidence" value="ECO:0007669"/>
    <property type="project" value="UniProtKB-SubCell"/>
</dbReference>
<dbReference type="GO" id="GO:0005886">
    <property type="term" value="C:plasma membrane"/>
    <property type="evidence" value="ECO:0007005"/>
    <property type="project" value="TAIR"/>
</dbReference>
<dbReference type="GO" id="GO:0009536">
    <property type="term" value="C:plastid"/>
    <property type="evidence" value="ECO:0007005"/>
    <property type="project" value="TAIR"/>
</dbReference>
<dbReference type="GO" id="GO:0003677">
    <property type="term" value="F:DNA binding"/>
    <property type="evidence" value="ECO:0007669"/>
    <property type="project" value="UniProtKB-KW"/>
</dbReference>
<dbReference type="GO" id="GO:0046982">
    <property type="term" value="F:protein heterodimerization activity"/>
    <property type="evidence" value="ECO:0007669"/>
    <property type="project" value="InterPro"/>
</dbReference>
<dbReference type="GO" id="GO:0030527">
    <property type="term" value="F:structural constituent of chromatin"/>
    <property type="evidence" value="ECO:0007669"/>
    <property type="project" value="InterPro"/>
</dbReference>
<dbReference type="CDD" id="cd22911">
    <property type="entry name" value="HFD_H3"/>
    <property type="match status" value="1"/>
</dbReference>
<dbReference type="FunFam" id="1.10.20.10:FF:000078">
    <property type="entry name" value="Histone H3"/>
    <property type="match status" value="1"/>
</dbReference>
<dbReference type="FunFam" id="1.10.20.10:FF:000044">
    <property type="entry name" value="Histone H3.3"/>
    <property type="match status" value="1"/>
</dbReference>
<dbReference type="Gene3D" id="1.10.20.10">
    <property type="entry name" value="Histone, subunit A"/>
    <property type="match status" value="1"/>
</dbReference>
<dbReference type="InterPro" id="IPR009072">
    <property type="entry name" value="Histone-fold"/>
</dbReference>
<dbReference type="InterPro" id="IPR007125">
    <property type="entry name" value="Histone_H2A/H2B/H3"/>
</dbReference>
<dbReference type="InterPro" id="IPR000164">
    <property type="entry name" value="Histone_H3/CENP-A"/>
</dbReference>
<dbReference type="PANTHER" id="PTHR11426">
    <property type="entry name" value="HISTONE H3"/>
    <property type="match status" value="1"/>
</dbReference>
<dbReference type="Pfam" id="PF00125">
    <property type="entry name" value="Histone"/>
    <property type="match status" value="1"/>
</dbReference>
<dbReference type="PRINTS" id="PR00622">
    <property type="entry name" value="HISTONEH3"/>
</dbReference>
<dbReference type="SMART" id="SM00428">
    <property type="entry name" value="H3"/>
    <property type="match status" value="1"/>
</dbReference>
<dbReference type="SUPFAM" id="SSF47113">
    <property type="entry name" value="Histone-fold"/>
    <property type="match status" value="1"/>
</dbReference>
<dbReference type="PROSITE" id="PS00322">
    <property type="entry name" value="HISTONE_H3_1"/>
    <property type="match status" value="1"/>
</dbReference>
<dbReference type="PROSITE" id="PS00959">
    <property type="entry name" value="HISTONE_H3_2"/>
    <property type="match status" value="1"/>
</dbReference>
<sequence length="136" mass="15268">MARTKQTARKSTGGKAPRKQLATKAARKSAPATGGVKKPHRFRPGTVALREIRKYQKSTELLIRKLPFQRLVREIAQDFKTDLRFQSSAVAALQEAAEAYLVGLFEDTNLCAIHAKRVTIMPKDIQLARRIRGERA</sequence>
<keyword id="KW-0002">3D-structure</keyword>
<keyword id="KW-0007">Acetylation</keyword>
<keyword id="KW-0158">Chromosome</keyword>
<keyword id="KW-0238">DNA-binding</keyword>
<keyword id="KW-0488">Methylation</keyword>
<keyword id="KW-0544">Nucleosome core</keyword>
<keyword id="KW-0539">Nucleus</keyword>
<keyword id="KW-0597">Phosphoprotein</keyword>
<keyword id="KW-1185">Reference proteome</keyword>
<evidence type="ECO:0000256" key="1">
    <source>
        <dbReference type="SAM" id="MobiDB-lite"/>
    </source>
</evidence>
<evidence type="ECO:0000269" key="2">
    <source>
    </source>
</evidence>
<evidence type="ECO:0000269" key="3">
    <source>
    </source>
</evidence>
<evidence type="ECO:0000269" key="4">
    <source>
    </source>
</evidence>
<evidence type="ECO:0000269" key="5">
    <source>
    </source>
</evidence>
<evidence type="ECO:0000269" key="6">
    <source>
    </source>
</evidence>
<evidence type="ECO:0000269" key="7">
    <source>
    </source>
</evidence>
<evidence type="ECO:0000269" key="8">
    <source>
    </source>
</evidence>
<evidence type="ECO:0000269" key="9">
    <source>
    </source>
</evidence>
<evidence type="ECO:0000269" key="10">
    <source>
    </source>
</evidence>
<evidence type="ECO:0000269" key="11">
    <source>
    </source>
</evidence>
<evidence type="ECO:0000269" key="12">
    <source>
    </source>
</evidence>
<evidence type="ECO:0000269" key="13">
    <source>
    </source>
</evidence>
<evidence type="ECO:0000269" key="14">
    <source>
    </source>
</evidence>
<evidence type="ECO:0000269" key="15">
    <source>
    </source>
</evidence>
<evidence type="ECO:0000269" key="16">
    <source>
    </source>
</evidence>
<evidence type="ECO:0000269" key="17">
    <source>
    </source>
</evidence>
<evidence type="ECO:0000269" key="18">
    <source>
    </source>
</evidence>
<evidence type="ECO:0000269" key="19">
    <source>
    </source>
</evidence>
<evidence type="ECO:0000269" key="20">
    <source>
    </source>
</evidence>
<evidence type="ECO:0000269" key="21">
    <source>
    </source>
</evidence>
<evidence type="ECO:0000269" key="22">
    <source>
    </source>
</evidence>
<evidence type="ECO:0000269" key="23">
    <source>
    </source>
</evidence>
<evidence type="ECO:0000305" key="24"/>
<evidence type="ECO:0007829" key="25">
    <source>
        <dbReference type="PDB" id="5VBC"/>
    </source>
</evidence>
<evidence type="ECO:0007829" key="26">
    <source>
        <dbReference type="PDB" id="6LQF"/>
    </source>
</evidence>
<evidence type="ECO:0007829" key="27">
    <source>
        <dbReference type="PDB" id="8J91"/>
    </source>
</evidence>
<evidence type="ECO:0007829" key="28">
    <source>
        <dbReference type="PDB" id="8J92"/>
    </source>
</evidence>
<proteinExistence type="evidence at protein level"/>
<name>H31_ARATH</name>
<accession>P59226</accession>
<reference key="1">
    <citation type="journal article" date="1987" name="Dev. Genet.">
        <title>Histone genes in higher plants: organization and expression.</title>
        <authorList>
            <person name="Chaubet N."/>
            <person name="Chaboute M.-E."/>
            <person name="Philipps G."/>
            <person name="Gigot C."/>
        </authorList>
    </citation>
    <scope>NUCLEOTIDE SEQUENCE [GENOMIC DNA] (AT1G09200)</scope>
</reference>
<reference key="2">
    <citation type="journal article" date="1987" name="Plant Mol. Biol.">
        <title>Genomic organization and nucleotide sequences of two histone H3 and two histone H4 genes of Arabidopsis thaliana.</title>
        <authorList>
            <person name="Chaboute M.-E."/>
            <person name="Chaubet N."/>
            <person name="Philipps G."/>
            <person name="Ehling M."/>
            <person name="Gigot C."/>
        </authorList>
    </citation>
    <scope>NUCLEOTIDE SEQUENCE [GENOMIC DNA] (AT1G09200 AND AT5G65360)</scope>
</reference>
<reference key="3">
    <citation type="journal article" date="2000" name="Nature">
        <title>Sequence and analysis of chromosome 1 of the plant Arabidopsis thaliana.</title>
        <authorList>
            <person name="Theologis A."/>
            <person name="Ecker J.R."/>
            <person name="Palm C.J."/>
            <person name="Federspiel N.A."/>
            <person name="Kaul S."/>
            <person name="White O."/>
            <person name="Alonso J."/>
            <person name="Altafi H."/>
            <person name="Araujo R."/>
            <person name="Bowman C.L."/>
            <person name="Brooks S.Y."/>
            <person name="Buehler E."/>
            <person name="Chan A."/>
            <person name="Chao Q."/>
            <person name="Chen H."/>
            <person name="Cheuk R.F."/>
            <person name="Chin C.W."/>
            <person name="Chung M.K."/>
            <person name="Conn L."/>
            <person name="Conway A.B."/>
            <person name="Conway A.R."/>
            <person name="Creasy T.H."/>
            <person name="Dewar K."/>
            <person name="Dunn P."/>
            <person name="Etgu P."/>
            <person name="Feldblyum T.V."/>
            <person name="Feng J.-D."/>
            <person name="Fong B."/>
            <person name="Fujii C.Y."/>
            <person name="Gill J.E."/>
            <person name="Goldsmith A.D."/>
            <person name="Haas B."/>
            <person name="Hansen N.F."/>
            <person name="Hughes B."/>
            <person name="Huizar L."/>
            <person name="Hunter J.L."/>
            <person name="Jenkins J."/>
            <person name="Johnson-Hopson C."/>
            <person name="Khan S."/>
            <person name="Khaykin E."/>
            <person name="Kim C.J."/>
            <person name="Koo H.L."/>
            <person name="Kremenetskaia I."/>
            <person name="Kurtz D.B."/>
            <person name="Kwan A."/>
            <person name="Lam B."/>
            <person name="Langin-Hooper S."/>
            <person name="Lee A."/>
            <person name="Lee J.M."/>
            <person name="Lenz C.A."/>
            <person name="Li J.H."/>
            <person name="Li Y.-P."/>
            <person name="Lin X."/>
            <person name="Liu S.X."/>
            <person name="Liu Z.A."/>
            <person name="Luros J.S."/>
            <person name="Maiti R."/>
            <person name="Marziali A."/>
            <person name="Militscher J."/>
            <person name="Miranda M."/>
            <person name="Nguyen M."/>
            <person name="Nierman W.C."/>
            <person name="Osborne B.I."/>
            <person name="Pai G."/>
            <person name="Peterson J."/>
            <person name="Pham P.K."/>
            <person name="Rizzo M."/>
            <person name="Rooney T."/>
            <person name="Rowley D."/>
            <person name="Sakano H."/>
            <person name="Salzberg S.L."/>
            <person name="Schwartz J.R."/>
            <person name="Shinn P."/>
            <person name="Southwick A.M."/>
            <person name="Sun H."/>
            <person name="Tallon L.J."/>
            <person name="Tambunga G."/>
            <person name="Toriumi M.J."/>
            <person name="Town C.D."/>
            <person name="Utterback T."/>
            <person name="Van Aken S."/>
            <person name="Vaysberg M."/>
            <person name="Vysotskaia V.S."/>
            <person name="Walker M."/>
            <person name="Wu D."/>
            <person name="Yu G."/>
            <person name="Fraser C.M."/>
            <person name="Venter J.C."/>
            <person name="Davis R.W."/>
        </authorList>
    </citation>
    <scope>NUCLEOTIDE SEQUENCE [LARGE SCALE GENOMIC DNA] (AT1G09200)</scope>
    <source>
        <strain>cv. Columbia</strain>
    </source>
</reference>
<reference key="4">
    <citation type="journal article" date="2000" name="DNA Res.">
        <title>Structural analysis of Arabidopsis thaliana chromosome 3. I. Sequence features of the regions of 4,504,864 bp covered by sixty P1 and TAC clones.</title>
        <authorList>
            <person name="Sato S."/>
            <person name="Nakamura Y."/>
            <person name="Kaneko T."/>
            <person name="Katoh T."/>
            <person name="Asamizu E."/>
            <person name="Tabata S."/>
        </authorList>
    </citation>
    <scope>NUCLEOTIDE SEQUENCE [LARGE SCALE GENOMIC DNA] (AT3G27360)</scope>
    <source>
        <strain>cv. Columbia</strain>
    </source>
</reference>
<reference key="5">
    <citation type="journal article" date="2000" name="Nature">
        <title>Sequence and analysis of chromosome 5 of the plant Arabidopsis thaliana.</title>
        <authorList>
            <person name="Tabata S."/>
            <person name="Kaneko T."/>
            <person name="Nakamura Y."/>
            <person name="Kotani H."/>
            <person name="Kato T."/>
            <person name="Asamizu E."/>
            <person name="Miyajima N."/>
            <person name="Sasamoto S."/>
            <person name="Kimura T."/>
            <person name="Hosouchi T."/>
            <person name="Kawashima K."/>
            <person name="Kohara M."/>
            <person name="Matsumoto M."/>
            <person name="Matsuno A."/>
            <person name="Muraki A."/>
            <person name="Nakayama S."/>
            <person name="Nakazaki N."/>
            <person name="Naruo K."/>
            <person name="Okumura S."/>
            <person name="Shinpo S."/>
            <person name="Takeuchi C."/>
            <person name="Wada T."/>
            <person name="Watanabe A."/>
            <person name="Yamada M."/>
            <person name="Yasuda M."/>
            <person name="Sato S."/>
            <person name="de la Bastide M."/>
            <person name="Huang E."/>
            <person name="Spiegel L."/>
            <person name="Gnoj L."/>
            <person name="O'Shaughnessy A."/>
            <person name="Preston R."/>
            <person name="Habermann K."/>
            <person name="Murray J."/>
            <person name="Johnson D."/>
            <person name="Rohlfing T."/>
            <person name="Nelson J."/>
            <person name="Stoneking T."/>
            <person name="Pepin K."/>
            <person name="Spieth J."/>
            <person name="Sekhon M."/>
            <person name="Armstrong J."/>
            <person name="Becker M."/>
            <person name="Belter E."/>
            <person name="Cordum H."/>
            <person name="Cordes M."/>
            <person name="Courtney L."/>
            <person name="Courtney W."/>
            <person name="Dante M."/>
            <person name="Du H."/>
            <person name="Edwards J."/>
            <person name="Fryman J."/>
            <person name="Haakensen B."/>
            <person name="Lamar E."/>
            <person name="Latreille P."/>
            <person name="Leonard S."/>
            <person name="Meyer R."/>
            <person name="Mulvaney E."/>
            <person name="Ozersky P."/>
            <person name="Riley A."/>
            <person name="Strowmatt C."/>
            <person name="Wagner-McPherson C."/>
            <person name="Wollam A."/>
            <person name="Yoakum M."/>
            <person name="Bell M."/>
            <person name="Dedhia N."/>
            <person name="Parnell L."/>
            <person name="Shah R."/>
            <person name="Rodriguez M."/>
            <person name="Hoon See L."/>
            <person name="Vil D."/>
            <person name="Baker J."/>
            <person name="Kirchoff K."/>
            <person name="Toth K."/>
            <person name="King L."/>
            <person name="Bahret A."/>
            <person name="Miller B."/>
            <person name="Marra M.A."/>
            <person name="Martienssen R."/>
            <person name="McCombie W.R."/>
            <person name="Wilson R.K."/>
            <person name="Murphy G."/>
            <person name="Bancroft I."/>
            <person name="Volckaert G."/>
            <person name="Wambutt R."/>
            <person name="Duesterhoeft A."/>
            <person name="Stiekema W."/>
            <person name="Pohl T."/>
            <person name="Entian K.-D."/>
            <person name="Terryn N."/>
            <person name="Hartley N."/>
            <person name="Bent E."/>
            <person name="Johnson S."/>
            <person name="Langham S.-A."/>
            <person name="McCullagh B."/>
            <person name="Robben J."/>
            <person name="Grymonprez B."/>
            <person name="Zimmermann W."/>
            <person name="Ramsperger U."/>
            <person name="Wedler H."/>
            <person name="Balke K."/>
            <person name="Wedler E."/>
            <person name="Peters S."/>
            <person name="van Staveren M."/>
            <person name="Dirkse W."/>
            <person name="Mooijman P."/>
            <person name="Klein Lankhorst R."/>
            <person name="Weitzenegger T."/>
            <person name="Bothe G."/>
            <person name="Rose M."/>
            <person name="Hauf J."/>
            <person name="Berneiser S."/>
            <person name="Hempel S."/>
            <person name="Feldpausch M."/>
            <person name="Lamberth S."/>
            <person name="Villarroel R."/>
            <person name="Gielen J."/>
            <person name="Ardiles W."/>
            <person name="Bents O."/>
            <person name="Lemcke K."/>
            <person name="Kolesov G."/>
            <person name="Mayer K.F.X."/>
            <person name="Rudd S."/>
            <person name="Schoof H."/>
            <person name="Schueller C."/>
            <person name="Zaccaria P."/>
            <person name="Mewes H.-W."/>
            <person name="Bevan M."/>
            <person name="Fransz P.F."/>
        </authorList>
    </citation>
    <scope>NUCLEOTIDE SEQUENCE [LARGE SCALE GENOMIC DNA] (AT5G10390 AND AT5G10400)</scope>
    <source>
        <strain>cv. Columbia</strain>
    </source>
</reference>
<reference key="6">
    <citation type="journal article" date="1998" name="DNA Res.">
        <title>Structural analysis of Arabidopsis thaliana chromosome 5. V. Sequence features of the regions of 1,381,565 bp covered by twenty one physically assigned P1 and TAC clones.</title>
        <authorList>
            <person name="Kaneko T."/>
            <person name="Kotani H."/>
            <person name="Nakamura Y."/>
            <person name="Sato S."/>
            <person name="Asamizu E."/>
            <person name="Miyajima N."/>
            <person name="Tabata S."/>
        </authorList>
    </citation>
    <scope>NUCLEOTIDE SEQUENCE [LARGE SCALE GENOMIC DNA] (AT5G65360)</scope>
    <source>
        <strain>cv. Columbia</strain>
    </source>
</reference>
<reference key="7">
    <citation type="journal article" date="2017" name="Plant J.">
        <title>Araport11: a complete reannotation of the Arabidopsis thaliana reference genome.</title>
        <authorList>
            <person name="Cheng C.Y."/>
            <person name="Krishnakumar V."/>
            <person name="Chan A.P."/>
            <person name="Thibaud-Nissen F."/>
            <person name="Schobel S."/>
            <person name="Town C.D."/>
        </authorList>
    </citation>
    <scope>GENOME REANNOTATION</scope>
    <source>
        <strain>cv. Columbia</strain>
    </source>
</reference>
<reference key="8">
    <citation type="journal article" date="2002" name="Science">
        <title>Functional annotation of a full-length Arabidopsis cDNA collection.</title>
        <authorList>
            <person name="Seki M."/>
            <person name="Narusaka M."/>
            <person name="Kamiya A."/>
            <person name="Ishida J."/>
            <person name="Satou M."/>
            <person name="Sakurai T."/>
            <person name="Nakajima M."/>
            <person name="Enju A."/>
            <person name="Akiyama K."/>
            <person name="Oono Y."/>
            <person name="Muramatsu M."/>
            <person name="Hayashizaki Y."/>
            <person name="Kawai J."/>
            <person name="Carninci P."/>
            <person name="Itoh M."/>
            <person name="Ishii Y."/>
            <person name="Arakawa T."/>
            <person name="Shibata K."/>
            <person name="Shinagawa A."/>
            <person name="Shinozaki K."/>
        </authorList>
    </citation>
    <scope>NUCLEOTIDE SEQUENCE [LARGE SCALE MRNA] (AT5G65360)</scope>
    <source>
        <strain>cv. Columbia</strain>
    </source>
</reference>
<reference key="9">
    <citation type="journal article" date="2003" name="Science">
        <title>Empirical analysis of transcriptional activity in the Arabidopsis genome.</title>
        <authorList>
            <person name="Yamada K."/>
            <person name="Lim J."/>
            <person name="Dale J.M."/>
            <person name="Chen H."/>
            <person name="Shinn P."/>
            <person name="Palm C.J."/>
            <person name="Southwick A.M."/>
            <person name="Wu H.C."/>
            <person name="Kim C.J."/>
            <person name="Nguyen M."/>
            <person name="Pham P.K."/>
            <person name="Cheuk R.F."/>
            <person name="Karlin-Newmann G."/>
            <person name="Liu S.X."/>
            <person name="Lam B."/>
            <person name="Sakano H."/>
            <person name="Wu T."/>
            <person name="Yu G."/>
            <person name="Miranda M."/>
            <person name="Quach H.L."/>
            <person name="Tripp M."/>
            <person name="Chang C.H."/>
            <person name="Lee J.M."/>
            <person name="Toriumi M.J."/>
            <person name="Chan M.M."/>
            <person name="Tang C.C."/>
            <person name="Onodera C.S."/>
            <person name="Deng J.M."/>
            <person name="Akiyama K."/>
            <person name="Ansari Y."/>
            <person name="Arakawa T."/>
            <person name="Banh J."/>
            <person name="Banno F."/>
            <person name="Bowser L."/>
            <person name="Brooks S.Y."/>
            <person name="Carninci P."/>
            <person name="Chao Q."/>
            <person name="Choy N."/>
            <person name="Enju A."/>
            <person name="Goldsmith A.D."/>
            <person name="Gurjal M."/>
            <person name="Hansen N.F."/>
            <person name="Hayashizaki Y."/>
            <person name="Johnson-Hopson C."/>
            <person name="Hsuan V.W."/>
            <person name="Iida K."/>
            <person name="Karnes M."/>
            <person name="Khan S."/>
            <person name="Koesema E."/>
            <person name="Ishida J."/>
            <person name="Jiang P.X."/>
            <person name="Jones T."/>
            <person name="Kawai J."/>
            <person name="Kamiya A."/>
            <person name="Meyers C."/>
            <person name="Nakajima M."/>
            <person name="Narusaka M."/>
            <person name="Seki M."/>
            <person name="Sakurai T."/>
            <person name="Satou M."/>
            <person name="Tamse R."/>
            <person name="Vaysberg M."/>
            <person name="Wallender E.K."/>
            <person name="Wong C."/>
            <person name="Yamamura Y."/>
            <person name="Yuan S."/>
            <person name="Shinozaki K."/>
            <person name="Davis R.W."/>
            <person name="Theologis A."/>
            <person name="Ecker J.R."/>
        </authorList>
    </citation>
    <scope>NUCLEOTIDE SEQUENCE [LARGE SCALE MRNA] (AT1G09200; AT3G27360; AT5G10390; AT5G10400 AND AT5G65360)</scope>
    <source>
        <strain>cv. Columbia</strain>
    </source>
</reference>
<reference key="10">
    <citation type="submission" date="2002-03" db="EMBL/GenBank/DDBJ databases">
        <title>Full-length cDNA from Arabidopsis thaliana.</title>
        <authorList>
            <person name="Brover V.V."/>
            <person name="Troukhan M.E."/>
            <person name="Alexandrov N.A."/>
            <person name="Lu Y.-P."/>
            <person name="Flavell R.B."/>
            <person name="Feldmann K.A."/>
        </authorList>
    </citation>
    <scope>NUCLEOTIDE SEQUENCE [LARGE SCALE MRNA]</scope>
</reference>
<reference key="11">
    <citation type="journal article" date="2002" name="EMBO J.">
        <title>DNA methylation controls histone H3 lysine 9 methylation and heterochromatin assembly in Arabidopsis.</title>
        <authorList>
            <person name="Soppe W.J.J."/>
            <person name="Jasencakova Z."/>
            <person name="Houben A."/>
            <person name="Kakutani T."/>
            <person name="Meister A."/>
            <person name="Huang M.S."/>
            <person name="Jacobsen S.E."/>
            <person name="Schubert I."/>
            <person name="Fransz P.F."/>
        </authorList>
    </citation>
    <scope>METHYLATION AT LYS-10</scope>
</reference>
<reference key="12">
    <citation type="journal article" date="2002" name="Nature">
        <title>Control of CpNpG DNA methylation by the KRYPTONITE histone H3 methyltransferase.</title>
        <authorList>
            <person name="Jackson J.P."/>
            <person name="Lindroth A.M."/>
            <person name="Cao X."/>
            <person name="Jacobsen S.E."/>
        </authorList>
    </citation>
    <scope>INTERACTION WITH LHP1</scope>
</reference>
<reference key="13">
    <citation type="journal article" date="2003" name="Plant J.">
        <title>Histone modifications in Arabidopsis -- high methylation of H3 lysine 9 is dispensable for constitutive heterochromatin.</title>
        <authorList>
            <person name="Jasencakova Z."/>
            <person name="Soppe W.J.J."/>
            <person name="Meister A."/>
            <person name="Gernand D."/>
            <person name="Turner B.M."/>
            <person name="Schubert I."/>
        </authorList>
    </citation>
    <scope>ACETYLATION AT LYS-10 AND LYS-19</scope>
    <scope>METHYLATION AT LYS-5 AND LYS-10</scope>
</reference>
<reference key="14">
    <citation type="journal article" date="2003" name="Plant Mol. Biol.">
        <title>Genome-wide gene expression in an Arabidopsis cell suspension.</title>
        <authorList>
            <person name="Menges M."/>
            <person name="Hennig L."/>
            <person name="Gruissem W."/>
            <person name="Murray J.A.H."/>
        </authorList>
    </citation>
    <scope>DEVELOPMENTAL STAGE</scope>
</reference>
<reference key="15">
    <citation type="journal article" date="2003" name="Cytogenet. Genome Res.">
        <title>The temporal and spatial pattern of histone H3 phosphorylation at serine 28 and serine 10 is similar in plants but differs between mono- and polycentric chromosomes.</title>
        <authorList>
            <person name="Gernand D."/>
            <person name="Demidov D."/>
            <person name="Houben A."/>
        </authorList>
    </citation>
    <scope>PHOSPHORYLATION AT SER-11 AND SER-29</scope>
</reference>
<reference key="16">
    <citation type="journal article" date="2004" name="Chromosoma">
        <title>Dimethylation of histone H3 lysine 9 is a critical mark for DNA methylation and gene silencing in Arabidopsis thaliana.</title>
        <authorList>
            <person name="Jackson J.P."/>
            <person name="Johnson L."/>
            <person name="Jasencakova Z."/>
            <person name="Zhang X."/>
            <person name="PerezBurgos L."/>
            <person name="Singh P.B."/>
            <person name="Cheng X."/>
            <person name="Schubert I."/>
            <person name="Jenuwein T."/>
            <person name="Jacobsen S.E."/>
        </authorList>
    </citation>
    <scope>METHYLATION AT LYS-10</scope>
</reference>
<reference key="17">
    <citation type="journal article" date="2004" name="EMBO J.">
        <title>Dual histone H3 methylation marks at lysines 9 and 27 required for interaction with CHROMOMETHYLASE3.</title>
        <authorList>
            <person name="Lindroth A.M."/>
            <person name="Shultis D."/>
            <person name="Jasencakova Z."/>
            <person name="Fuchs J."/>
            <person name="Johnson L."/>
            <person name="Schubert D."/>
            <person name="Patnaik D."/>
            <person name="Pradhan S."/>
            <person name="Goodrich J."/>
            <person name="Schubert I."/>
            <person name="Jenuwein T."/>
            <person name="Khorasanizadeh S."/>
            <person name="Jacobsen S.E."/>
        </authorList>
    </citation>
    <scope>INTERACTION WITH CMT3</scope>
</reference>
<reference key="18">
    <citation type="journal article" date="2004" name="Mol. Cell">
        <title>A concerted DNA methylation/histone methylation switch regulates rRNA gene dosage control and nucleolar dominance.</title>
        <authorList>
            <person name="Lawrence R.J."/>
            <person name="Earley K."/>
            <person name="Pontes O."/>
            <person name="Silva M."/>
            <person name="Chen Z.J."/>
            <person name="Neves N."/>
            <person name="Viegas W."/>
            <person name="Pikaard C.S."/>
        </authorList>
    </citation>
    <scope>DEACETYLATION BY HDT1</scope>
</reference>
<reference key="19">
    <citation type="journal article" date="2004" name="Nucleic Acids Res.">
        <title>Mass spectrometry analysis of Arabidopsis histone H3 reveals distinct combinations of post-translational modifications.</title>
        <authorList>
            <person name="Johnson L."/>
            <person name="Mollah S."/>
            <person name="Garcia B.A."/>
            <person name="Muratore T.L."/>
            <person name="Shabanowitz J."/>
            <person name="Hunt D.F."/>
            <person name="Jacobsen S.E."/>
        </authorList>
    </citation>
    <scope>ACETYLATION AT LYS-10; LYS-15; LYS-19 AND LYS-24</scope>
    <scope>LACK OF ACETYLATION AT LYS-28 AND LYS-37</scope>
    <scope>METHYLATION AT LYS-5; LYS-10; LYS-19; LYS-24; LYS-28 AND LYS-37</scope>
    <scope>LACK OF METHYLATION AT LYS-15</scope>
    <scope>IDENTIFICATION BY MASS SPECTROMETRY</scope>
</reference>
<reference key="20">
    <citation type="journal article" date="2004" name="Nature">
        <title>Vernalization requires epigenetic silencing of FLC by histone methylation.</title>
        <authorList>
            <person name="Bastow R."/>
            <person name="Mylne J.S."/>
            <person name="Lister C."/>
            <person name="Lippman Z."/>
            <person name="Martienssen R.A."/>
            <person name="Dean C."/>
        </authorList>
    </citation>
    <scope>METHYLATION AT LYS-5; LYS-10 AND LYS-28</scope>
</reference>
<reference key="21">
    <citation type="journal article" date="2005" name="Plant Cell">
        <title>Establishment of the vernalization-responsive, winter-annual habit in Arabidopsis requires a putative histone H3 methyl transferase.</title>
        <authorList>
            <person name="Kim S.Y."/>
            <person name="He Y."/>
            <person name="Jacob Y."/>
            <person name="Noh Y.-S."/>
            <person name="Michaels S."/>
            <person name="Amasino R."/>
        </authorList>
    </citation>
    <scope>METHYLATION AT LYS-5</scope>
</reference>
<reference key="22">
    <citation type="journal article" date="2005" name="Nat. Cell Biol.">
        <title>Prevention of early flowering by expression of FLOWERING LOCUS C requires methylation of histone H3 K36.</title>
        <authorList>
            <person name="Zhao Z."/>
            <person name="Yu Y."/>
            <person name="Meyer D."/>
            <person name="Wu C."/>
            <person name="Shen W.-H."/>
        </authorList>
    </citation>
    <scope>METHYLATION AT LYS-37</scope>
</reference>
<reference key="23">
    <citation type="journal article" date="2005" name="Cytogenet. Genome Res.">
        <title>Novel phosphorylation of histone H3 at threonine 11 that temporally correlates with condensation of mitotic and meiotic chromosomes in plant cells.</title>
        <authorList>
            <person name="Houben A."/>
            <person name="Demidov D."/>
            <person name="Rutten T."/>
            <person name="Scheidtmann K.H."/>
        </authorList>
    </citation>
    <scope>PHOSPHORYLATION AT SER-11; THR-12 AND SER-29</scope>
</reference>
<reference key="24">
    <citation type="journal article" date="2005" name="Plant J.">
        <title>Analysis of the histone H3 gene family in Arabidopsis and identification of the male-gamete-specific variant AtMGH3.</title>
        <authorList>
            <person name="Okada T."/>
            <person name="Endo M."/>
            <person name="Singh M.B."/>
            <person name="Bhalla P.L."/>
        </authorList>
    </citation>
    <scope>IDENTIFICATION</scope>
    <scope>TISSUE SPECIFICITY</scope>
</reference>
<reference key="25">
    <citation type="journal article" date="2006" name="Genes Dev.">
        <title>Erasure of histone acetylation by Arabidopsis HDA6 mediates large-scale gene silencing in nucleolar dominance.</title>
        <authorList>
            <person name="Earley K."/>
            <person name="Lawrence R.J."/>
            <person name="Pontes O."/>
            <person name="Reuther R."/>
            <person name="Enciso A.J."/>
            <person name="Silva M."/>
            <person name="Neves N."/>
            <person name="Gross M."/>
            <person name="Viegas W."/>
            <person name="Pikaard C.S."/>
        </authorList>
    </citation>
    <scope>ACETYLATION AT LYS-15 BY HAG1</scope>
    <scope>DEACETYLATION BY HDA6</scope>
</reference>
<reference key="26">
    <citation type="journal article" date="2006" name="Trends Plant Sci.">
        <title>Chromosomal histone modification patterns -- from conservation to diversity.</title>
        <authorList>
            <person name="Fuchs J."/>
            <person name="Demidov D."/>
            <person name="Houben A."/>
            <person name="Schubert I."/>
        </authorList>
    </citation>
    <scope>REVIEW</scope>
</reference>
<reference key="27">
    <citation type="journal article" date="2007" name="Curr. Biol.">
        <title>The PHD finger protein VRN5 functions in the epigenetic silencing of Arabidopsis FLC.</title>
        <authorList>
            <person name="Greb T."/>
            <person name="Mylne J.S."/>
            <person name="Crevillen P."/>
            <person name="Geraldo N."/>
            <person name="An H."/>
            <person name="Gendall A.R."/>
            <person name="Dean C."/>
        </authorList>
    </citation>
    <scope>ACETYLATION</scope>
    <scope>METHYLATION AT LYS-28</scope>
</reference>
<reference key="28">
    <citation type="journal article" date="2007" name="EMBO J.">
        <title>SKB1-mediated symmetric dimethylation of histone H4R3 controls flowering time in Arabidopsis.</title>
        <authorList>
            <person name="Wang X."/>
            <person name="Zhang Y."/>
            <person name="Ma Q."/>
            <person name="Zhang Z."/>
            <person name="Xue Y."/>
            <person name="Bao S."/>
            <person name="Chong K."/>
        </authorList>
    </citation>
    <scope>ACETYLATION AT LYS-15</scope>
</reference>
<reference key="29">
    <citation type="journal article" date="2007" name="Genes Dev.">
        <title>VIM1, a methylcytosine-binding protein required for centromeric heterochromatinization.</title>
        <authorList>
            <person name="Woo H.R."/>
            <person name="Pontes O."/>
            <person name="Pikaard C.S."/>
            <person name="Richards E.J."/>
        </authorList>
    </citation>
    <scope>INTERACTION WITH ORTH2</scope>
</reference>
<reference key="30">
    <citation type="journal article" date="2007" name="PLoS Biol.">
        <title>Whole-genome analysis of histone H3 lysine 27 trimethylation in Arabidopsis.</title>
        <authorList>
            <person name="Zhang X."/>
            <person name="Clarenz O."/>
            <person name="Cokus S."/>
            <person name="Bernatavichute Y.V."/>
            <person name="Pellegrini M."/>
            <person name="Goodrich J."/>
            <person name="Jacobsen S.E."/>
        </authorList>
    </citation>
    <scope>METHYLATION AT LYS-28</scope>
    <scope>SUBCELLULAR LOCATION</scope>
</reference>
<reference key="31">
    <citation type="journal article" date="2009" name="Nat. Struct. Mol. Biol.">
        <title>ATXR5 and ATXR6 are H3K27 monomethyltransferases required for chromatin structure and gene silencing.</title>
        <authorList>
            <person name="Jacob Y."/>
            <person name="Feng S."/>
            <person name="LeBlanc C.A."/>
            <person name="Bernatavichute Y.V."/>
            <person name="Stroud H."/>
            <person name="Cokus S."/>
            <person name="Johnson L.M."/>
            <person name="Pellegrini M."/>
            <person name="Jacobsen S.E."/>
            <person name="Michaels S.D."/>
        </authorList>
    </citation>
    <scope>METHYLATION AT LYS-28</scope>
</reference>
<reference key="32">
    <citation type="journal article" date="2010" name="Nature">
        <title>Regulation of heterochromatic DNA replication by histone H3 lysine 27 methyltransferases.</title>
        <authorList>
            <person name="Jacob Y."/>
            <person name="Stroud H."/>
            <person name="Leblanc C."/>
            <person name="Feng S."/>
            <person name="Zhuo L."/>
            <person name="Caro E."/>
            <person name="Hassel C."/>
            <person name="Gutierrez C."/>
            <person name="Michaels S.D."/>
            <person name="Jacobsen S.E."/>
        </authorList>
    </citation>
    <scope>METHYLATION AT LYS-28</scope>
</reference>
<reference key="33">
    <citation type="journal article" date="2014" name="Biol. Open">
        <title>The HIRA complex that deposits the histone H3.3 is conserved in Arabidopsis and facilitates transcriptional dynamics.</title>
        <authorList>
            <person name="Nie X."/>
            <person name="Wang H."/>
            <person name="Li J."/>
            <person name="Holec S."/>
            <person name="Berger F."/>
        </authorList>
    </citation>
    <scope>SUBCELLULAR LOCATION</scope>
    <source>
        <strain>cv. Columbia</strain>
    </source>
</reference>
<reference key="34">
    <citation type="journal article" date="2014" name="Science">
        <title>Selective methylation of histone H3 variant H3.1 regulates heterochromatin replication.</title>
        <authorList>
            <person name="Jacob Y."/>
            <person name="Bergamin E."/>
            <person name="Donoghue M.T."/>
            <person name="Mongeon V."/>
            <person name="LeBlanc C."/>
            <person name="Voigt P."/>
            <person name="Underwood C.J."/>
            <person name="Brunzelle J.S."/>
            <person name="Michaels S.D."/>
            <person name="Reinberg D."/>
            <person name="Couture J.F."/>
            <person name="Martienssen R.A."/>
        </authorList>
    </citation>
    <scope>METHYLATION AT LYS-28</scope>
</reference>
<reference key="35">
    <citation type="journal article" date="2022" name="Science">
        <title>The histone H3.1 variant regulates TONSOKU-mediated DNA repair during replication.</title>
        <authorList>
            <person name="Davarinejad H."/>
            <person name="Huang Y.C."/>
            <person name="Mermaz B."/>
            <person name="LeBlanc C."/>
            <person name="Poulet A."/>
            <person name="Thomson G."/>
            <person name="Joly V."/>
            <person name="Munoz M."/>
            <person name="Arvanitis-Vigneault A."/>
            <person name="Valsakumar D."/>
            <person name="Villarino G."/>
            <person name="Ross A."/>
            <person name="Rotstein B.H."/>
            <person name="Alarcon E.I."/>
            <person name="Brunzelle J.S."/>
            <person name="Voigt P."/>
            <person name="Dong J."/>
            <person name="Couture J.F."/>
            <person name="Jacob Y."/>
        </authorList>
    </citation>
    <scope>X-RAY CRYSTALLOGRAPHY (3.17 ANGSTROMS) OF 2-46 IN COMPLEX WITH TSK</scope>
    <scope>INTERACTION WITH TSK</scope>
    <scope>METHYLATION AT LYS-28</scope>
    <scope>MUTAGENESIS OF SER-29 AND ALA-32</scope>
</reference>
<protein>
    <recommendedName>
        <fullName>Histone H3.1</fullName>
    </recommendedName>
</protein>
<gene>
    <name type="primary">HTR2</name>
    <name type="ordered locus">At1g09200</name>
    <name type="ORF">T12M4.9</name>
</gene>
<gene>
    <name type="primary">HTR3</name>
    <name type="ordered locus">At3g27360</name>
    <name type="ORF">K1G2.8</name>
</gene>
<gene>
    <name type="primary">HTR13</name>
    <name type="ordered locus">At5g10390</name>
    <name type="ORF">F12B17_260</name>
</gene>
<gene>
    <name type="primary">HTR9</name>
    <name type="ordered locus">At5g10400</name>
    <name type="ORF">F12B17_250</name>
</gene>
<gene>
    <name type="primary">HTR1</name>
    <name type="ordered locus">At5g65360</name>
    <name type="ORF">MNA5.9</name>
</gene>
<organism>
    <name type="scientific">Arabidopsis thaliana</name>
    <name type="common">Mouse-ear cress</name>
    <dbReference type="NCBI Taxonomy" id="3702"/>
    <lineage>
        <taxon>Eukaryota</taxon>
        <taxon>Viridiplantae</taxon>
        <taxon>Streptophyta</taxon>
        <taxon>Embryophyta</taxon>
        <taxon>Tracheophyta</taxon>
        <taxon>Spermatophyta</taxon>
        <taxon>Magnoliopsida</taxon>
        <taxon>eudicotyledons</taxon>
        <taxon>Gunneridae</taxon>
        <taxon>Pentapetalae</taxon>
        <taxon>rosids</taxon>
        <taxon>malvids</taxon>
        <taxon>Brassicales</taxon>
        <taxon>Brassicaceae</taxon>
        <taxon>Camelineae</taxon>
        <taxon>Arabidopsis</taxon>
    </lineage>
</organism>
<feature type="chain" id="PRO_0000221267" description="Histone H3.1">
    <location>
        <begin position="1"/>
        <end position="136"/>
    </location>
</feature>
<feature type="region of interest" description="Disordered" evidence="1">
    <location>
        <begin position="1"/>
        <end position="43"/>
    </location>
</feature>
<feature type="site" description="Not N6-methylated" evidence="10">
    <location>
        <position position="15"/>
    </location>
</feature>
<feature type="site" description="Not N6-acetylated" evidence="10">
    <location>
        <position position="28"/>
    </location>
</feature>
<feature type="site" description="Recognition by ATXR5 and ATXR6" evidence="21">
    <location>
        <position position="32"/>
    </location>
</feature>
<feature type="site" description="Required for interaction with TSK" evidence="23">
    <location>
        <position position="32"/>
    </location>
</feature>
<feature type="site" description="Not N6-acetylated" evidence="10">
    <location>
        <position position="37"/>
    </location>
</feature>
<feature type="modified residue" description="N6,N6,N6-trimethyllysine; alternate" evidence="4 6 10 12">
    <location>
        <position position="5"/>
    </location>
</feature>
<feature type="modified residue" description="N6,N6-dimethyllysine; alternate" evidence="4 6 10 12">
    <location>
        <position position="5"/>
    </location>
</feature>
<feature type="modified residue" description="N6-methyllysine; alternate" evidence="4 6 10 12">
    <location>
        <position position="5"/>
    </location>
</feature>
<feature type="modified residue" description="N6,N6,N6-trimethyllysine; alternate" evidence="3 4 6 8 10">
    <location>
        <position position="10"/>
    </location>
</feature>
<feature type="modified residue" description="N6,N6-dimethyllysine; alternate" evidence="3 4 6 8 10">
    <location>
        <position position="10"/>
    </location>
</feature>
<feature type="modified residue" description="N6-acetyllysine; alternate" evidence="4 10 16">
    <location>
        <position position="10"/>
    </location>
</feature>
<feature type="modified residue" description="N6-methyllysine; alternate" evidence="3 4 6 8 10">
    <location>
        <position position="10"/>
    </location>
</feature>
<feature type="modified residue" description="Phosphoserine" evidence="5 11">
    <location>
        <position position="11"/>
    </location>
</feature>
<feature type="modified residue" description="Phosphothreonine" evidence="11">
    <location>
        <position position="12"/>
    </location>
</feature>
<feature type="modified residue" description="N6-acetyllysine" evidence="10 15 16 18">
    <location>
        <position position="15"/>
    </location>
</feature>
<feature type="modified residue" description="N6-acetyllysine; alternate" evidence="4 10 16">
    <location>
        <position position="19"/>
    </location>
</feature>
<feature type="modified residue" description="N6-methyllysine; alternate" evidence="10">
    <location>
        <position position="19"/>
    </location>
</feature>
<feature type="modified residue" description="N6-acetyllysine; alternate" evidence="10 16">
    <location>
        <position position="24"/>
    </location>
</feature>
<feature type="modified residue" description="N6-methyllysine; alternate" evidence="10">
    <location>
        <position position="24"/>
    </location>
</feature>
<feature type="modified residue" description="N6,N6,N6-trimethyllysine; alternate" evidence="6 10 16 19 20 21">
    <location>
        <position position="28"/>
    </location>
</feature>
<feature type="modified residue" description="N6,N6-dimethyllysine; alternate" evidence="6 10 16 19 20 21">
    <location>
        <position position="28"/>
    </location>
</feature>
<feature type="modified residue" description="N6-methyllysine; alternate" evidence="6 10 16 19 20 21 23">
    <location>
        <position position="28"/>
    </location>
</feature>
<feature type="modified residue" description="Phosphoserine" evidence="5 11">
    <location>
        <position position="29"/>
    </location>
</feature>
<feature type="modified residue" description="N6,N6,N6-trimethyllysine; alternate" evidence="10 14">
    <location>
        <position position="37"/>
    </location>
</feature>
<feature type="modified residue" description="N6,N6-dimethyllysine; alternate" evidence="10 14">
    <location>
        <position position="37"/>
    </location>
</feature>
<feature type="modified residue" description="N6-methyllysine; alternate" evidence="10 14">
    <location>
        <position position="37"/>
    </location>
</feature>
<feature type="mutagenesis site" description="Abolished methylation at K-28 (H3K27me) without affecting interaction with TSK." evidence="23">
    <original>S</original>
    <variation>A</variation>
    <location>
        <position position="29"/>
    </location>
</feature>
<feature type="mutagenesis site" description="Abolished interaction with TSK." evidence="23">
    <original>A</original>
    <variation>T</variation>
    <location>
        <position position="32"/>
    </location>
</feature>
<feature type="strand" evidence="26">
    <location>
        <begin position="4"/>
        <end position="6"/>
    </location>
</feature>
<feature type="strand" evidence="25">
    <location>
        <begin position="27"/>
        <end position="29"/>
    </location>
</feature>
<feature type="strand" evidence="25">
    <location>
        <begin position="32"/>
        <end position="34"/>
    </location>
</feature>
<feature type="helix" evidence="28">
    <location>
        <begin position="46"/>
        <end position="57"/>
    </location>
</feature>
<feature type="helix" evidence="27">
    <location>
        <begin position="65"/>
        <end position="77"/>
    </location>
</feature>
<feature type="strand" evidence="27">
    <location>
        <begin position="80"/>
        <end position="82"/>
    </location>
</feature>
<feature type="helix" evidence="27">
    <location>
        <begin position="87"/>
        <end position="114"/>
    </location>
</feature>
<feature type="strand" evidence="27">
    <location>
        <begin position="118"/>
        <end position="120"/>
    </location>
</feature>
<feature type="helix" evidence="27">
    <location>
        <begin position="122"/>
        <end position="132"/>
    </location>
</feature>